<name>INVO_LEMCA</name>
<keyword id="KW-0963">Cytoplasm</keyword>
<keyword id="KW-0417">Keratinization</keyword>
<keyword id="KW-0677">Repeat</keyword>
<dbReference type="EMBL" id="M21864">
    <property type="protein sequence ID" value="AAA36826.1"/>
    <property type="molecule type" value="Genomic_DNA"/>
</dbReference>
<dbReference type="PIR" id="A43733">
    <property type="entry name" value="A43733"/>
</dbReference>
<dbReference type="SMR" id="P14590"/>
<dbReference type="GO" id="GO:0001533">
    <property type="term" value="C:cornified envelope"/>
    <property type="evidence" value="ECO:0007669"/>
    <property type="project" value="InterPro"/>
</dbReference>
<dbReference type="GO" id="GO:0005737">
    <property type="term" value="C:cytoplasm"/>
    <property type="evidence" value="ECO:0007669"/>
    <property type="project" value="UniProtKB-SubCell"/>
</dbReference>
<dbReference type="GO" id="GO:0031424">
    <property type="term" value="P:keratinization"/>
    <property type="evidence" value="ECO:0007669"/>
    <property type="project" value="UniProtKB-KW"/>
</dbReference>
<dbReference type="InterPro" id="IPR009733">
    <property type="entry name" value="Involucrin2"/>
</dbReference>
<dbReference type="InterPro" id="IPR019743">
    <property type="entry name" value="Involucrin_CS"/>
</dbReference>
<dbReference type="InterPro" id="IPR019571">
    <property type="entry name" value="Involucrin_N"/>
</dbReference>
<dbReference type="Pfam" id="PF06994">
    <property type="entry name" value="Involucrin2"/>
    <property type="match status" value="10"/>
</dbReference>
<dbReference type="Pfam" id="PF10583">
    <property type="entry name" value="Involucrin_N"/>
    <property type="match status" value="1"/>
</dbReference>
<dbReference type="PROSITE" id="PS00795">
    <property type="entry name" value="INVOLUCRIN"/>
    <property type="match status" value="1"/>
</dbReference>
<accession>P14590</accession>
<sequence>MSQQHTLPVTLPPTLSQELLKNVSPPADIQQEQRKQPTPLPAPCQKVLSELPVAVPSKHEEKHATPVKGLLEQECGQLQQQEPQEQEVHLAKHQELQELQEQELHLGKQPEPQEQELHLGKQQQQQESQEQELYLGKQPEPQDQELHLGKQQAPQEQELHLGKQPEPQEQELHLGKQPEPQDQELYLGKRLEPQEQELHLGKQQQQQESQEQELDLGKQPEPQDQELHLGKQQAPQEQELHLGKQPEPQEQELHLVKQQEPQDQELHLGKRLEPQEQELHLGKQQQPQEQKLHPGEAAAAGVTGAGPAASKAARRATGAGTAPGKAAAAAGATGAGTAATAPATAEERQKAESLEQQLEQEKAQREEQLKEQLEEKKRILDQQLDQEVAKRYEQLGVKKEQLLQPLGQQEGQLEKPVFVPAPGQVQDIQPPQPPKGEVLLPAEQQQEPEV</sequence>
<comment type="function">
    <text>Part of the insoluble cornified cell envelope (CE) of stratified squamous epithelia.</text>
</comment>
<comment type="subunit">
    <text evidence="1">Directly or indirectly cross-linked to cornifelin (CNFN).</text>
</comment>
<comment type="subcellular location">
    <subcellularLocation>
        <location>Cytoplasm</location>
    </subcellularLocation>
    <text>Constituent of the scaffolding of the cornified envelope.</text>
</comment>
<comment type="tissue specificity">
    <text>Keratinocytes of epidermis and other stratified squamous epithelia.</text>
</comment>
<comment type="PTM">
    <text>Substrate of transglutaminase. Specific glutamines or lysines are cross-linked to keratins, desmoplakin and to inter involucrin molecules.</text>
</comment>
<comment type="similarity">
    <text evidence="3">Belongs to the involucrin family.</text>
</comment>
<organism>
    <name type="scientific">Lemur catta</name>
    <name type="common">Ring-tailed lemur</name>
    <dbReference type="NCBI Taxonomy" id="9447"/>
    <lineage>
        <taxon>Eukaryota</taxon>
        <taxon>Metazoa</taxon>
        <taxon>Chordata</taxon>
        <taxon>Craniata</taxon>
        <taxon>Vertebrata</taxon>
        <taxon>Euteleostomi</taxon>
        <taxon>Mammalia</taxon>
        <taxon>Eutheria</taxon>
        <taxon>Euarchontoglires</taxon>
        <taxon>Primates</taxon>
        <taxon>Strepsirrhini</taxon>
        <taxon>Lemuriformes</taxon>
        <taxon>Lemuridae</taxon>
        <taxon>Lemur</taxon>
    </lineage>
</organism>
<feature type="chain" id="PRO_0000159738" description="Involucrin">
    <location>
        <begin position="1"/>
        <end position="450"/>
    </location>
</feature>
<feature type="region of interest" description="Disordered" evidence="2">
    <location>
        <begin position="1"/>
        <end position="43"/>
    </location>
</feature>
<feature type="region of interest" description="Disordered" evidence="2">
    <location>
        <begin position="77"/>
        <end position="370"/>
    </location>
</feature>
<feature type="region of interest" description="Disordered" evidence="2">
    <location>
        <begin position="422"/>
        <end position="450"/>
    </location>
</feature>
<feature type="compositionally biased region" description="Polar residues" evidence="2">
    <location>
        <begin position="1"/>
        <end position="19"/>
    </location>
</feature>
<feature type="compositionally biased region" description="Basic and acidic residues" evidence="2">
    <location>
        <begin position="86"/>
        <end position="108"/>
    </location>
</feature>
<feature type="compositionally biased region" description="Low complexity" evidence="2">
    <location>
        <begin position="120"/>
        <end position="135"/>
    </location>
</feature>
<feature type="compositionally biased region" description="Basic and acidic residues" evidence="2">
    <location>
        <begin position="187"/>
        <end position="200"/>
    </location>
</feature>
<feature type="compositionally biased region" description="Basic and acidic residues" evidence="2">
    <location>
        <begin position="264"/>
        <end position="281"/>
    </location>
</feature>
<feature type="compositionally biased region" description="Low complexity" evidence="2">
    <location>
        <begin position="295"/>
        <end position="344"/>
    </location>
</feature>
<feature type="compositionally biased region" description="Basic and acidic residues" evidence="2">
    <location>
        <begin position="345"/>
        <end position="370"/>
    </location>
</feature>
<evidence type="ECO:0000250" key="1"/>
<evidence type="ECO:0000256" key="2">
    <source>
        <dbReference type="SAM" id="MobiDB-lite"/>
    </source>
</evidence>
<evidence type="ECO:0000305" key="3"/>
<proteinExistence type="evidence at transcript level"/>
<reference key="1">
    <citation type="journal article" date="1988" name="Cell">
        <title>Remodeling of the involucrin gene during primate evolution.</title>
        <authorList>
            <person name="Tseng H."/>
            <person name="Green H."/>
        </authorList>
    </citation>
    <scope>NUCLEOTIDE SEQUENCE [GENOMIC DNA]</scope>
</reference>
<protein>
    <recommendedName>
        <fullName>Involucrin</fullName>
    </recommendedName>
</protein>
<gene>
    <name type="primary">IVL</name>
</gene>